<proteinExistence type="inferred from homology"/>
<organism>
    <name type="scientific">Treponema pallidum (strain Nichols)</name>
    <dbReference type="NCBI Taxonomy" id="243276"/>
    <lineage>
        <taxon>Bacteria</taxon>
        <taxon>Pseudomonadati</taxon>
        <taxon>Spirochaetota</taxon>
        <taxon>Spirochaetia</taxon>
        <taxon>Spirochaetales</taxon>
        <taxon>Treponemataceae</taxon>
        <taxon>Treponema</taxon>
    </lineage>
</organism>
<keyword id="KW-1185">Reference proteome</keyword>
<keyword id="KW-0687">Ribonucleoprotein</keyword>
<keyword id="KW-0689">Ribosomal protein</keyword>
<keyword id="KW-0694">RNA-binding</keyword>
<keyword id="KW-0699">rRNA-binding</keyword>
<comment type="function">
    <text evidence="1">Forms part of the ribosomal stalk, playing a central role in the interaction of the ribosome with GTP-bound translation factors.</text>
</comment>
<comment type="subunit">
    <text evidence="1">Part of the ribosomal stalk of the 50S ribosomal subunit. The N-terminus interacts with L11 and the large rRNA to form the base of the stalk. The C-terminus forms an elongated spine to which L12 dimers bind in a sequential fashion forming a multimeric L10(L12)X complex (By similarity).</text>
</comment>
<comment type="similarity">
    <text evidence="2">Belongs to the universal ribosomal protein uL10 family.</text>
</comment>
<feature type="chain" id="PRO_0000154739" description="Large ribosomal subunit protein uL10">
    <location>
        <begin position="1"/>
        <end position="180"/>
    </location>
</feature>
<accession>O83267</accession>
<gene>
    <name type="primary">rplJ</name>
    <name type="ordered locus">TP_0239</name>
</gene>
<name>RL10_TREPA</name>
<protein>
    <recommendedName>
        <fullName evidence="2">Large ribosomal subunit protein uL10</fullName>
    </recommendedName>
    <alternativeName>
        <fullName>50S ribosomal protein L10</fullName>
    </alternativeName>
</protein>
<evidence type="ECO:0000250" key="1"/>
<evidence type="ECO:0000305" key="2"/>
<dbReference type="EMBL" id="AE000520">
    <property type="protein sequence ID" value="AAC65227.1"/>
    <property type="molecule type" value="Genomic_DNA"/>
</dbReference>
<dbReference type="PIR" id="A71350">
    <property type="entry name" value="A71350"/>
</dbReference>
<dbReference type="RefSeq" id="WP_010881687.1">
    <property type="nucleotide sequence ID" value="NC_021490.2"/>
</dbReference>
<dbReference type="SMR" id="O83267"/>
<dbReference type="STRING" id="243276.TP_0239"/>
<dbReference type="EnsemblBacteria" id="AAC65227">
    <property type="protein sequence ID" value="AAC65227"/>
    <property type="gene ID" value="TP_0239"/>
</dbReference>
<dbReference type="GeneID" id="93876031"/>
<dbReference type="KEGG" id="tpa:TP_0239"/>
<dbReference type="KEGG" id="tpw:TPANIC_0239"/>
<dbReference type="eggNOG" id="COG0244">
    <property type="taxonomic scope" value="Bacteria"/>
</dbReference>
<dbReference type="HOGENOM" id="CLU_092227_1_2_12"/>
<dbReference type="OrthoDB" id="9808307at2"/>
<dbReference type="Proteomes" id="UP000000811">
    <property type="component" value="Chromosome"/>
</dbReference>
<dbReference type="GO" id="GO:0015934">
    <property type="term" value="C:large ribosomal subunit"/>
    <property type="evidence" value="ECO:0007669"/>
    <property type="project" value="InterPro"/>
</dbReference>
<dbReference type="GO" id="GO:0070180">
    <property type="term" value="F:large ribosomal subunit rRNA binding"/>
    <property type="evidence" value="ECO:0007669"/>
    <property type="project" value="UniProtKB-UniRule"/>
</dbReference>
<dbReference type="GO" id="GO:0003735">
    <property type="term" value="F:structural constituent of ribosome"/>
    <property type="evidence" value="ECO:0007669"/>
    <property type="project" value="InterPro"/>
</dbReference>
<dbReference type="GO" id="GO:0006412">
    <property type="term" value="P:translation"/>
    <property type="evidence" value="ECO:0007669"/>
    <property type="project" value="UniProtKB-UniRule"/>
</dbReference>
<dbReference type="CDD" id="cd05797">
    <property type="entry name" value="Ribosomal_L10"/>
    <property type="match status" value="1"/>
</dbReference>
<dbReference type="Gene3D" id="3.30.70.1730">
    <property type="match status" value="1"/>
</dbReference>
<dbReference type="HAMAP" id="MF_00362">
    <property type="entry name" value="Ribosomal_uL10"/>
    <property type="match status" value="1"/>
</dbReference>
<dbReference type="InterPro" id="IPR001790">
    <property type="entry name" value="Ribosomal_uL10"/>
</dbReference>
<dbReference type="InterPro" id="IPR043141">
    <property type="entry name" value="Ribosomal_uL10-like_sf"/>
</dbReference>
<dbReference type="InterPro" id="IPR022973">
    <property type="entry name" value="Ribosomal_uL10_bac"/>
</dbReference>
<dbReference type="InterPro" id="IPR047865">
    <property type="entry name" value="Ribosomal_uL10_bac_type"/>
</dbReference>
<dbReference type="InterPro" id="IPR002363">
    <property type="entry name" value="Ribosomal_uL10_CS_bac"/>
</dbReference>
<dbReference type="NCBIfam" id="NF000955">
    <property type="entry name" value="PRK00099.1-1"/>
    <property type="match status" value="1"/>
</dbReference>
<dbReference type="PANTHER" id="PTHR11560">
    <property type="entry name" value="39S RIBOSOMAL PROTEIN L10, MITOCHONDRIAL"/>
    <property type="match status" value="1"/>
</dbReference>
<dbReference type="Pfam" id="PF00466">
    <property type="entry name" value="Ribosomal_L10"/>
    <property type="match status" value="1"/>
</dbReference>
<dbReference type="SUPFAM" id="SSF160369">
    <property type="entry name" value="Ribosomal protein L10-like"/>
    <property type="match status" value="1"/>
</dbReference>
<dbReference type="PROSITE" id="PS01109">
    <property type="entry name" value="RIBOSOMAL_L10"/>
    <property type="match status" value="1"/>
</dbReference>
<reference key="1">
    <citation type="journal article" date="1998" name="Science">
        <title>Complete genome sequence of Treponema pallidum, the syphilis spirochete.</title>
        <authorList>
            <person name="Fraser C.M."/>
            <person name="Norris S.J."/>
            <person name="Weinstock G.M."/>
            <person name="White O."/>
            <person name="Sutton G.G."/>
            <person name="Dodson R.J."/>
            <person name="Gwinn M.L."/>
            <person name="Hickey E.K."/>
            <person name="Clayton R.A."/>
            <person name="Ketchum K.A."/>
            <person name="Sodergren E."/>
            <person name="Hardham J.M."/>
            <person name="McLeod M.P."/>
            <person name="Salzberg S.L."/>
            <person name="Peterson J.D."/>
            <person name="Khalak H.G."/>
            <person name="Richardson D.L."/>
            <person name="Howell J.K."/>
            <person name="Chidambaram M."/>
            <person name="Utterback T.R."/>
            <person name="McDonald L.A."/>
            <person name="Artiach P."/>
            <person name="Bowman C."/>
            <person name="Cotton M.D."/>
            <person name="Fujii C."/>
            <person name="Garland S.A."/>
            <person name="Hatch B."/>
            <person name="Horst K."/>
            <person name="Roberts K.M."/>
            <person name="Sandusky M."/>
            <person name="Weidman J.F."/>
            <person name="Smith H.O."/>
            <person name="Venter J.C."/>
        </authorList>
    </citation>
    <scope>NUCLEOTIDE SEQUENCE [LARGE SCALE GENOMIC DNA]</scope>
    <source>
        <strain>Nichols</strain>
    </source>
</reference>
<sequence length="180" mass="19566">MAVRARRLQPAKVAAVESLTRDLGEASSYIFTEYRGLTVEQLTALRRALREFSCVYRVVRNNFANIAFTSLNMTVGEYLVGPTAIALVDTEHANGVARVLFDFAKEVPALVVKGAILDGEVFDASKVEAYSKLPGKKELVSMFLSALNATTVKFVRVLQAVMDKRDEGVEVSVVSGGDSS</sequence>